<sequence>MADGIISVSYLSKIENNQVVPSEEVLRLLCQRLGINNILKNRQDELTSKLLLWYKTITDKNRQEAARMYEEIKRTFDDVQGAESIAYFLLFEMRYHLLLKDIHTVEALLIKLRELYDTFDDVMKYYYYKFLGLLYYCKEKYEDALEYYKKAEQRFRSQSFEKWEEADLHYLLALVYSRLWRILGCINYAQHALAIYQSEYDLKRSAECHILLGICYRRYGEVDQAIECYSLAHKIAQIINDTELLGTIEHNLGYLMSMKHEHYEAIQHYKKSLLYKRNSSLQARFITLFSLIKEYYVSKNYKKALANVEESLQLLKREKDGMTTYYEYYLHFTVYQYLLSEDISENEFETFMKDRVLPYFQRFKKYEDVAQYAEYLAIYYEKRHKYKLASKFYKMSYQFLKNMINI</sequence>
<proteinExistence type="evidence at transcript level"/>
<protein>
    <recommendedName>
        <fullName>Transcriptional activator NprA</fullName>
    </recommendedName>
</protein>
<comment type="function">
    <text evidence="1">Activates the transcription of nprS by about five fold. May bind to the upstream region of nprS promoter.</text>
</comment>
<comment type="induction">
    <text evidence="1">Expressed in the late logarithmic growth phase.</text>
</comment>
<reference key="1">
    <citation type="journal article" date="1990" name="J. Bacteriol.">
        <title>Cloning and nucleotide sequences of the Bacillus stearothermophilus neutral protease gene and its transcriptional activator gene.</title>
        <authorList>
            <person name="Nishiya Y."/>
            <person name="Imanaka T."/>
        </authorList>
    </citation>
    <scope>NUCLEOTIDE SEQUENCE [GENOMIC DNA]</scope>
    <scope>FUNCTION</scope>
    <scope>INDUCTION</scope>
    <source>
        <strain>TELNE</strain>
    </source>
</reference>
<name>NPRA_GEOSE</name>
<gene>
    <name type="primary">nprA</name>
</gene>
<dbReference type="EMBL" id="M34237">
    <property type="protein sequence ID" value="AAA22624.1"/>
    <property type="molecule type" value="Genomic_DNA"/>
</dbReference>
<dbReference type="PIR" id="A36706">
    <property type="entry name" value="A36706"/>
</dbReference>
<dbReference type="SMR" id="P43130"/>
<dbReference type="GO" id="GO:0003677">
    <property type="term" value="F:DNA binding"/>
    <property type="evidence" value="ECO:0007669"/>
    <property type="project" value="UniProtKB-KW"/>
</dbReference>
<dbReference type="CDD" id="cd00093">
    <property type="entry name" value="HTH_XRE"/>
    <property type="match status" value="1"/>
</dbReference>
<dbReference type="Gene3D" id="1.10.260.40">
    <property type="entry name" value="lambda repressor-like DNA-binding domains"/>
    <property type="match status" value="1"/>
</dbReference>
<dbReference type="Gene3D" id="1.25.40.10">
    <property type="entry name" value="Tetratricopeptide repeat domain"/>
    <property type="match status" value="1"/>
</dbReference>
<dbReference type="InterPro" id="IPR001387">
    <property type="entry name" value="Cro/C1-type_HTH"/>
</dbReference>
<dbReference type="InterPro" id="IPR010982">
    <property type="entry name" value="Lambda_DNA-bd_dom_sf"/>
</dbReference>
<dbReference type="InterPro" id="IPR011990">
    <property type="entry name" value="TPR-like_helical_dom_sf"/>
</dbReference>
<dbReference type="InterPro" id="IPR019734">
    <property type="entry name" value="TPR_rpt"/>
</dbReference>
<dbReference type="PANTHER" id="PTHR45641">
    <property type="entry name" value="TETRATRICOPEPTIDE REPEAT PROTEIN (AFU_ORTHOLOGUE AFUA_6G03870)"/>
    <property type="match status" value="1"/>
</dbReference>
<dbReference type="Pfam" id="PF01381">
    <property type="entry name" value="HTH_3"/>
    <property type="match status" value="1"/>
</dbReference>
<dbReference type="Pfam" id="PF18801">
    <property type="entry name" value="RapH_N"/>
    <property type="match status" value="1"/>
</dbReference>
<dbReference type="Pfam" id="PF13424">
    <property type="entry name" value="TPR_12"/>
    <property type="match status" value="1"/>
</dbReference>
<dbReference type="SMART" id="SM00028">
    <property type="entry name" value="TPR"/>
    <property type="match status" value="6"/>
</dbReference>
<dbReference type="SUPFAM" id="SSF47413">
    <property type="entry name" value="lambda repressor-like DNA-binding domains"/>
    <property type="match status" value="1"/>
</dbReference>
<dbReference type="SUPFAM" id="SSF48452">
    <property type="entry name" value="TPR-like"/>
    <property type="match status" value="2"/>
</dbReference>
<dbReference type="PROSITE" id="PS50005">
    <property type="entry name" value="TPR"/>
    <property type="match status" value="4"/>
</dbReference>
<dbReference type="PROSITE" id="PS50293">
    <property type="entry name" value="TPR_REGION"/>
    <property type="match status" value="1"/>
</dbReference>
<organism>
    <name type="scientific">Geobacillus stearothermophilus</name>
    <name type="common">Bacillus stearothermophilus</name>
    <dbReference type="NCBI Taxonomy" id="1422"/>
    <lineage>
        <taxon>Bacteria</taxon>
        <taxon>Bacillati</taxon>
        <taxon>Bacillota</taxon>
        <taxon>Bacilli</taxon>
        <taxon>Bacillales</taxon>
        <taxon>Anoxybacillaceae</taxon>
        <taxon>Geobacillus</taxon>
    </lineage>
</organism>
<accession>P43130</accession>
<keyword id="KW-0010">Activator</keyword>
<keyword id="KW-0238">DNA-binding</keyword>
<keyword id="KW-0677">Repeat</keyword>
<keyword id="KW-0802">TPR repeat</keyword>
<keyword id="KW-0804">Transcription</keyword>
<keyword id="KW-0805">Transcription regulation</keyword>
<feature type="chain" id="PRO_0000057947" description="Transcriptional activator NprA">
    <location>
        <begin position="1"/>
        <end position="406"/>
    </location>
</feature>
<feature type="repeat" description="TPR 1">
    <location>
        <begin position="125"/>
        <end position="158"/>
    </location>
</feature>
<feature type="repeat" description="TPR 2">
    <location>
        <begin position="206"/>
        <end position="239"/>
    </location>
</feature>
<feature type="repeat" description="TPR 3">
    <location>
        <begin position="246"/>
        <end position="279"/>
    </location>
</feature>
<feature type="repeat" description="TPR 4">
    <location>
        <begin position="285"/>
        <end position="318"/>
    </location>
</feature>
<evidence type="ECO:0000269" key="1">
    <source>
    </source>
</evidence>